<comment type="function">
    <text evidence="1">DNA-dependent RNA polymerase catalyzes the transcription of DNA into RNA using the four ribonucleoside triphosphates as substrates.</text>
</comment>
<comment type="catalytic activity">
    <reaction evidence="1">
        <text>RNA(n) + a ribonucleoside 5'-triphosphate = RNA(n+1) + diphosphate</text>
        <dbReference type="Rhea" id="RHEA:21248"/>
        <dbReference type="Rhea" id="RHEA-COMP:14527"/>
        <dbReference type="Rhea" id="RHEA-COMP:17342"/>
        <dbReference type="ChEBI" id="CHEBI:33019"/>
        <dbReference type="ChEBI" id="CHEBI:61557"/>
        <dbReference type="ChEBI" id="CHEBI:140395"/>
        <dbReference type="EC" id="2.7.7.6"/>
    </reaction>
</comment>
<comment type="cofactor">
    <cofactor evidence="1">
        <name>Mg(2+)</name>
        <dbReference type="ChEBI" id="CHEBI:18420"/>
    </cofactor>
    <text evidence="1">Binds 1 Mg(2+) ion per subunit.</text>
</comment>
<comment type="cofactor">
    <cofactor evidence="1">
        <name>Zn(2+)</name>
        <dbReference type="ChEBI" id="CHEBI:29105"/>
    </cofactor>
    <text evidence="1">Binds 1 Zn(2+) ion per subunit.</text>
</comment>
<comment type="subunit">
    <text evidence="1">In plastids the minimal PEP RNA polymerase catalytic core is composed of four subunits: alpha, beta, beta', and beta''. When a (nuclear-encoded) sigma factor is associated with the core the holoenzyme is formed, which can initiate transcription.</text>
</comment>
<comment type="subcellular location">
    <subcellularLocation>
        <location evidence="1">Plastid</location>
        <location evidence="1">Chloroplast</location>
    </subcellularLocation>
</comment>
<comment type="similarity">
    <text evidence="1">Belongs to the RNA polymerase beta' chain family. RpoC1 subfamily.</text>
</comment>
<evidence type="ECO:0000255" key="1">
    <source>
        <dbReference type="HAMAP-Rule" id="MF_01323"/>
    </source>
</evidence>
<feature type="chain" id="PRO_0000067896" description="DNA-directed RNA polymerase subunit beta'">
    <location>
        <begin position="1"/>
        <end position="687"/>
    </location>
</feature>
<feature type="binding site" evidence="1">
    <location>
        <position position="69"/>
    </location>
    <ligand>
        <name>Zn(2+)</name>
        <dbReference type="ChEBI" id="CHEBI:29105"/>
    </ligand>
</feature>
<feature type="binding site" evidence="1">
    <location>
        <position position="71"/>
    </location>
    <ligand>
        <name>Zn(2+)</name>
        <dbReference type="ChEBI" id="CHEBI:29105"/>
    </ligand>
</feature>
<feature type="binding site" evidence="1">
    <location>
        <position position="87"/>
    </location>
    <ligand>
        <name>Zn(2+)</name>
        <dbReference type="ChEBI" id="CHEBI:29105"/>
    </ligand>
</feature>
<feature type="binding site" evidence="1">
    <location>
        <position position="90"/>
    </location>
    <ligand>
        <name>Zn(2+)</name>
        <dbReference type="ChEBI" id="CHEBI:29105"/>
    </ligand>
</feature>
<feature type="binding site" evidence="1">
    <location>
        <position position="492"/>
    </location>
    <ligand>
        <name>Mg(2+)</name>
        <dbReference type="ChEBI" id="CHEBI:18420"/>
    </ligand>
</feature>
<feature type="binding site" evidence="1">
    <location>
        <position position="494"/>
    </location>
    <ligand>
        <name>Mg(2+)</name>
        <dbReference type="ChEBI" id="CHEBI:18420"/>
    </ligand>
</feature>
<feature type="binding site" evidence="1">
    <location>
        <position position="496"/>
    </location>
    <ligand>
        <name>Mg(2+)</name>
        <dbReference type="ChEBI" id="CHEBI:18420"/>
    </ligand>
</feature>
<proteinExistence type="inferred from homology"/>
<dbReference type="EC" id="2.7.7.6" evidence="1"/>
<dbReference type="EMBL" id="AB189069">
    <property type="protein sequence ID" value="BAD93458.1"/>
    <property type="molecule type" value="Genomic_DNA"/>
</dbReference>
<dbReference type="SMR" id="Q589B9"/>
<dbReference type="GO" id="GO:0009507">
    <property type="term" value="C:chloroplast"/>
    <property type="evidence" value="ECO:0007669"/>
    <property type="project" value="UniProtKB-SubCell"/>
</dbReference>
<dbReference type="GO" id="GO:0000428">
    <property type="term" value="C:DNA-directed RNA polymerase complex"/>
    <property type="evidence" value="ECO:0007669"/>
    <property type="project" value="UniProtKB-KW"/>
</dbReference>
<dbReference type="GO" id="GO:0005739">
    <property type="term" value="C:mitochondrion"/>
    <property type="evidence" value="ECO:0007669"/>
    <property type="project" value="GOC"/>
</dbReference>
<dbReference type="GO" id="GO:0003677">
    <property type="term" value="F:DNA binding"/>
    <property type="evidence" value="ECO:0007669"/>
    <property type="project" value="UniProtKB-UniRule"/>
</dbReference>
<dbReference type="GO" id="GO:0003899">
    <property type="term" value="F:DNA-directed RNA polymerase activity"/>
    <property type="evidence" value="ECO:0007669"/>
    <property type="project" value="UniProtKB-UniRule"/>
</dbReference>
<dbReference type="GO" id="GO:0000287">
    <property type="term" value="F:magnesium ion binding"/>
    <property type="evidence" value="ECO:0007669"/>
    <property type="project" value="UniProtKB-UniRule"/>
</dbReference>
<dbReference type="GO" id="GO:0008270">
    <property type="term" value="F:zinc ion binding"/>
    <property type="evidence" value="ECO:0007669"/>
    <property type="project" value="UniProtKB-UniRule"/>
</dbReference>
<dbReference type="GO" id="GO:0006351">
    <property type="term" value="P:DNA-templated transcription"/>
    <property type="evidence" value="ECO:0007669"/>
    <property type="project" value="UniProtKB-UniRule"/>
</dbReference>
<dbReference type="FunFam" id="4.10.860.120:FF:000007">
    <property type="entry name" value="DNA-directed RNA polymerase subunit gamma"/>
    <property type="match status" value="1"/>
</dbReference>
<dbReference type="Gene3D" id="1.10.40.90">
    <property type="match status" value="1"/>
</dbReference>
<dbReference type="Gene3D" id="2.40.40.20">
    <property type="match status" value="1"/>
</dbReference>
<dbReference type="Gene3D" id="4.10.860.120">
    <property type="entry name" value="RNA polymerase II, clamp domain"/>
    <property type="match status" value="1"/>
</dbReference>
<dbReference type="Gene3D" id="1.10.274.100">
    <property type="entry name" value="RNA polymerase Rpb1, domain 3"/>
    <property type="match status" value="1"/>
</dbReference>
<dbReference type="HAMAP" id="MF_01323">
    <property type="entry name" value="RNApol_bact_RpoC1"/>
    <property type="match status" value="1"/>
</dbReference>
<dbReference type="InterPro" id="IPR045867">
    <property type="entry name" value="DNA-dir_RpoC_beta_prime"/>
</dbReference>
<dbReference type="InterPro" id="IPR000722">
    <property type="entry name" value="RNA_pol_asu"/>
</dbReference>
<dbReference type="InterPro" id="IPR006592">
    <property type="entry name" value="RNA_pol_N"/>
</dbReference>
<dbReference type="InterPro" id="IPR007080">
    <property type="entry name" value="RNA_pol_Rpb1_1"/>
</dbReference>
<dbReference type="InterPro" id="IPR042102">
    <property type="entry name" value="RNA_pol_Rpb1_3_sf"/>
</dbReference>
<dbReference type="InterPro" id="IPR044893">
    <property type="entry name" value="RNA_pol_Rpb1_clamp_domain"/>
</dbReference>
<dbReference type="InterPro" id="IPR034678">
    <property type="entry name" value="RNApol_RpoC1"/>
</dbReference>
<dbReference type="PANTHER" id="PTHR19376">
    <property type="entry name" value="DNA-DIRECTED RNA POLYMERASE"/>
    <property type="match status" value="1"/>
</dbReference>
<dbReference type="PANTHER" id="PTHR19376:SF54">
    <property type="entry name" value="DNA-DIRECTED RNA POLYMERASE SUBUNIT BETA"/>
    <property type="match status" value="1"/>
</dbReference>
<dbReference type="Pfam" id="PF04997">
    <property type="entry name" value="RNA_pol_Rpb1_1"/>
    <property type="match status" value="1"/>
</dbReference>
<dbReference type="Pfam" id="PF00623">
    <property type="entry name" value="RNA_pol_Rpb1_2"/>
    <property type="match status" value="2"/>
</dbReference>
<dbReference type="SMART" id="SM00663">
    <property type="entry name" value="RPOLA_N"/>
    <property type="match status" value="1"/>
</dbReference>
<dbReference type="SUPFAM" id="SSF64484">
    <property type="entry name" value="beta and beta-prime subunits of DNA dependent RNA-polymerase"/>
    <property type="match status" value="1"/>
</dbReference>
<reference key="1">
    <citation type="submission" date="2004-08" db="EMBL/GenBank/DDBJ databases">
        <title>A partial chloroplast genome of Silene latifolia.</title>
        <authorList>
            <person name="Kejnovsky E."/>
            <person name="Kubat Z."/>
            <person name="Hobza R."/>
            <person name="Lengerova M."/>
            <person name="Sato S."/>
            <person name="Tabata S."/>
            <person name="Fukui K."/>
            <person name="Matsunaga S."/>
            <person name="Vyskot B."/>
        </authorList>
    </citation>
    <scope>NUCLEOTIDE SEQUENCE [GENOMIC DNA]</scope>
</reference>
<name>RPOC1_SILLA</name>
<accession>Q589B9</accession>
<gene>
    <name evidence="1" type="primary">rpoC1</name>
</gene>
<keyword id="KW-0150">Chloroplast</keyword>
<keyword id="KW-0240">DNA-directed RNA polymerase</keyword>
<keyword id="KW-0460">Magnesium</keyword>
<keyword id="KW-0479">Metal-binding</keyword>
<keyword id="KW-0548">Nucleotidyltransferase</keyword>
<keyword id="KW-0934">Plastid</keyword>
<keyword id="KW-0804">Transcription</keyword>
<keyword id="KW-0808">Transferase</keyword>
<keyword id="KW-0862">Zinc</keyword>
<sequence>MIDQYKHQQLRIGLVSPKQISAWATKILPNREIVGEVTKPYTFHYKTNKPEKDGLFCERIFGPIKSGICACGNYRVIRNEKEDPKFCEQCGVEFVDSRIRRYQMGYIKLACPVTHVWYLKRLPSYIANFLDKPLKELEGLVYCDYPNFSFARPIAKKPTFLRLRGLFEYEIQSWKYSIPLFFTTQGFDAFRNREISTGAGAIREQLADLDLRTIIDYSFAEWKELGEEDPTGNEWEDRKVGRRKDFLVRRMELAKHFIRTNIEPEWMVLCLLPVLPPELRPIIQIDGGKLMSSDINELYRRVIYRNNTLTDLLTTSRSTPGELVMCQEKLVQEAVDTLLDNGIRGQPMRDGHNKVYKSFSDVIEGKEGRFRETLLGKRVDYSGRSVIVVGPSLSLHRCGLPREIAIELFQTFIIRGLIRQHLASNIGVAKSKIREKEPIIWKILQEVMQGHPILLNRAPTLHRLGIQAFQPILVEGRAICLHPLVCKGFNADFDGDQMAVHVPLSLEAQTEARLLMFSHMNLLSPAIGDPISVPTQDMLIGLYILTSGTRRGICANRYNPWNRKNDQNERIDDKNYKYMEEPFFCNSYDAIGAYCQKRINLDSPLWLRWRLDQRIIASREAPVEVHYESLGTYHEIYAHYLIIRNIKKEIIFVYIRTTVGHIYLYREIEEAIQGFSRACSYGKTVLK</sequence>
<organism>
    <name type="scientific">Silene latifolia</name>
    <name type="common">White campion</name>
    <name type="synonym">Bladder campion</name>
    <dbReference type="NCBI Taxonomy" id="37657"/>
    <lineage>
        <taxon>Eukaryota</taxon>
        <taxon>Viridiplantae</taxon>
        <taxon>Streptophyta</taxon>
        <taxon>Embryophyta</taxon>
        <taxon>Tracheophyta</taxon>
        <taxon>Spermatophyta</taxon>
        <taxon>Magnoliopsida</taxon>
        <taxon>eudicotyledons</taxon>
        <taxon>Gunneridae</taxon>
        <taxon>Pentapetalae</taxon>
        <taxon>Caryophyllales</taxon>
        <taxon>Caryophyllaceae</taxon>
        <taxon>Sileneae</taxon>
        <taxon>Silene</taxon>
        <taxon>Silene subgen. Behenantha</taxon>
        <taxon>Silene sect. Melandrium</taxon>
    </lineage>
</organism>
<geneLocation type="chloroplast"/>
<protein>
    <recommendedName>
        <fullName evidence="1">DNA-directed RNA polymerase subunit beta'</fullName>
        <ecNumber evidence="1">2.7.7.6</ecNumber>
    </recommendedName>
    <alternativeName>
        <fullName evidence="1">PEP</fullName>
    </alternativeName>
    <alternativeName>
        <fullName evidence="1">Plastid-encoded RNA polymerase subunit beta'</fullName>
        <shortName evidence="1">RNA polymerase subunit beta'</shortName>
    </alternativeName>
</protein>